<gene>
    <name type="primary">ACP6</name>
</gene>
<sequence>MITGVFSMRLWTPVGVLTSLAYCLHQRRVALAELQEADGRRPVDRSLLKSKMVQVVFRHGARSPRKPLPLEEQVEWNPQLLEVPPQTQFDYTVTNLAGGPKPYSPYDAQYCETTLKGGMFAGQLTKVGMQQMFALGERLRKNYVEDIPFLSPTFSPQEVFIRSTNIFRNLESTRCLLAGLFQCQKEGPIIIHTDEADSEVLYPNYQSCWSLRQRTRGRRQTASLQPGISEDLKKVKDRMGIDSSDKVDFFILLDNMAAEQAHNLPSCPMLKRFAQMIEQRAVDTSLYILPKEDRESLQMAVGPLLHILESNLLKAMDSATAPDKIRKLYLYAAHDVTLIPLLMTLGIFDHKWPPFAVDLTMELYQHLESKEWFVQLYYHGKEQVPRGCPDGLCPLDMFLNAMSVYTLSPEKYHALCSQTQVMEVGNGE</sequence>
<reference key="1">
    <citation type="submission" date="2004-11" db="EMBL/GenBank/DDBJ databases">
        <authorList>
            <consortium name="The German cDNA consortium"/>
        </authorList>
    </citation>
    <scope>NUCLEOTIDE SEQUENCE [LARGE SCALE MRNA]</scope>
    <source>
        <tissue>Kidney</tissue>
    </source>
</reference>
<accession>Q5R8C0</accession>
<proteinExistence type="evidence at transcript level"/>
<evidence type="ECO:0000250" key="1"/>
<evidence type="ECO:0000250" key="2">
    <source>
        <dbReference type="UniProtKB" id="Q9NPH0"/>
    </source>
</evidence>
<evidence type="ECO:0000305" key="3"/>
<protein>
    <recommendedName>
        <fullName>Lysophosphatidic acid phosphatase type 6</fullName>
        <ecNumber evidence="2">3.1.3.2</ecNumber>
    </recommendedName>
    <alternativeName>
        <fullName>Acid phosphatase 6, lysophosphatidic</fullName>
    </alternativeName>
</protein>
<feature type="transit peptide" description="Mitochondrion" evidence="1">
    <location>
        <begin position="1"/>
        <end position="32"/>
    </location>
</feature>
<feature type="chain" id="PRO_0000023967" description="Lysophosphatidic acid phosphatase type 6">
    <location>
        <begin position="33"/>
        <end position="428"/>
    </location>
</feature>
<feature type="region of interest" description="Substrate binding" evidence="1">
    <location>
        <begin position="58"/>
        <end position="168"/>
    </location>
</feature>
<feature type="active site" description="Nucleophile" evidence="1">
    <location>
        <position position="59"/>
    </location>
</feature>
<feature type="active site" description="Proton donor" evidence="1">
    <location>
        <position position="335"/>
    </location>
</feature>
<keyword id="KW-0378">Hydrolase</keyword>
<keyword id="KW-0443">Lipid metabolism</keyword>
<keyword id="KW-0496">Mitochondrion</keyword>
<keyword id="KW-1208">Phospholipid metabolism</keyword>
<keyword id="KW-1185">Reference proteome</keyword>
<keyword id="KW-0809">Transit peptide</keyword>
<dbReference type="EC" id="3.1.3.2" evidence="2"/>
<dbReference type="EMBL" id="CR859833">
    <property type="protein sequence ID" value="CAH91990.1"/>
    <property type="molecule type" value="mRNA"/>
</dbReference>
<dbReference type="RefSeq" id="NP_001127492.1">
    <property type="nucleotide sequence ID" value="NM_001134020.1"/>
</dbReference>
<dbReference type="SMR" id="Q5R8C0"/>
<dbReference type="FunCoup" id="Q5R8C0">
    <property type="interactions" value="745"/>
</dbReference>
<dbReference type="STRING" id="9601.ENSPPYP00000001102"/>
<dbReference type="GeneID" id="100174567"/>
<dbReference type="KEGG" id="pon:100174567"/>
<dbReference type="CTD" id="51205"/>
<dbReference type="eggNOG" id="KOG3720">
    <property type="taxonomic scope" value="Eukaryota"/>
</dbReference>
<dbReference type="InParanoid" id="Q5R8C0"/>
<dbReference type="OrthoDB" id="10257284at2759"/>
<dbReference type="Proteomes" id="UP000001595">
    <property type="component" value="Unplaced"/>
</dbReference>
<dbReference type="GO" id="GO:0005739">
    <property type="term" value="C:mitochondrion"/>
    <property type="evidence" value="ECO:0000250"/>
    <property type="project" value="UniProtKB"/>
</dbReference>
<dbReference type="GO" id="GO:0003993">
    <property type="term" value="F:acid phosphatase activity"/>
    <property type="evidence" value="ECO:0007669"/>
    <property type="project" value="UniProtKB-EC"/>
</dbReference>
<dbReference type="GO" id="GO:0052642">
    <property type="term" value="F:lysophosphatidic acid phosphatase activity"/>
    <property type="evidence" value="ECO:0000250"/>
    <property type="project" value="UniProtKB"/>
</dbReference>
<dbReference type="GO" id="GO:2001311">
    <property type="term" value="P:lysobisphosphatidic acid metabolic process"/>
    <property type="evidence" value="ECO:0000250"/>
    <property type="project" value="UniProtKB"/>
</dbReference>
<dbReference type="CDD" id="cd07061">
    <property type="entry name" value="HP_HAP_like"/>
    <property type="match status" value="1"/>
</dbReference>
<dbReference type="FunFam" id="3.40.50.1240:FF:000030">
    <property type="entry name" value="Lysophosphatidic acid phosphatase type 6"/>
    <property type="match status" value="1"/>
</dbReference>
<dbReference type="Gene3D" id="3.40.50.1240">
    <property type="entry name" value="Phosphoglycerate mutase-like"/>
    <property type="match status" value="1"/>
</dbReference>
<dbReference type="InterPro" id="IPR000560">
    <property type="entry name" value="His_Pase_clade-2"/>
</dbReference>
<dbReference type="InterPro" id="IPR029033">
    <property type="entry name" value="His_PPase_superfam"/>
</dbReference>
<dbReference type="InterPro" id="IPR050645">
    <property type="entry name" value="Histidine_acid_phosphatase"/>
</dbReference>
<dbReference type="PANTHER" id="PTHR11567">
    <property type="entry name" value="ACID PHOSPHATASE-RELATED"/>
    <property type="match status" value="1"/>
</dbReference>
<dbReference type="PANTHER" id="PTHR11567:SF202">
    <property type="entry name" value="LYSOPHOSPHATIDIC ACID PHOSPHATASE TYPE 6"/>
    <property type="match status" value="1"/>
</dbReference>
<dbReference type="Pfam" id="PF00328">
    <property type="entry name" value="His_Phos_2"/>
    <property type="match status" value="1"/>
</dbReference>
<dbReference type="SUPFAM" id="SSF53254">
    <property type="entry name" value="Phosphoglycerate mutase-like"/>
    <property type="match status" value="1"/>
</dbReference>
<name>PPA6_PONAB</name>
<organism>
    <name type="scientific">Pongo abelii</name>
    <name type="common">Sumatran orangutan</name>
    <name type="synonym">Pongo pygmaeus abelii</name>
    <dbReference type="NCBI Taxonomy" id="9601"/>
    <lineage>
        <taxon>Eukaryota</taxon>
        <taxon>Metazoa</taxon>
        <taxon>Chordata</taxon>
        <taxon>Craniata</taxon>
        <taxon>Vertebrata</taxon>
        <taxon>Euteleostomi</taxon>
        <taxon>Mammalia</taxon>
        <taxon>Eutheria</taxon>
        <taxon>Euarchontoglires</taxon>
        <taxon>Primates</taxon>
        <taxon>Haplorrhini</taxon>
        <taxon>Catarrhini</taxon>
        <taxon>Hominidae</taxon>
        <taxon>Pongo</taxon>
    </lineage>
</organism>
<comment type="function">
    <text evidence="2">Hydrolyzes lysophosphatidic acid (LPA) containing a medium length fatty acid chain to the corresponding monoacylglycerol. Has highest activity with lysophosphatidic acid containing myristate (C14:0), monounsaturated oleate (C18:1) or palmitate (C16:0), and lower activity with C18:0 and C6:0 lysophosphatidic acid.</text>
</comment>
<comment type="catalytic activity">
    <reaction evidence="2">
        <text>a phosphate monoester + H2O = an alcohol + phosphate</text>
        <dbReference type="Rhea" id="RHEA:15017"/>
        <dbReference type="ChEBI" id="CHEBI:15377"/>
        <dbReference type="ChEBI" id="CHEBI:30879"/>
        <dbReference type="ChEBI" id="CHEBI:43474"/>
        <dbReference type="ChEBI" id="CHEBI:67140"/>
        <dbReference type="EC" id="3.1.3.2"/>
    </reaction>
    <physiologicalReaction direction="left-to-right" evidence="2">
        <dbReference type="Rhea" id="RHEA:15018"/>
    </physiologicalReaction>
</comment>
<comment type="catalytic activity">
    <reaction evidence="2">
        <text>1-(9Z-octadecenoyl)-sn-glycero-3-phosphate + H2O = 1-(9Z-octadecenoyl)-sn-glycerol + phosphate</text>
        <dbReference type="Rhea" id="RHEA:39835"/>
        <dbReference type="ChEBI" id="CHEBI:15377"/>
        <dbReference type="ChEBI" id="CHEBI:43474"/>
        <dbReference type="ChEBI" id="CHEBI:74544"/>
        <dbReference type="ChEBI" id="CHEBI:75757"/>
    </reaction>
    <physiologicalReaction direction="left-to-right" evidence="2">
        <dbReference type="Rhea" id="RHEA:39836"/>
    </physiologicalReaction>
</comment>
<comment type="subunit">
    <text evidence="2">Monomer.</text>
</comment>
<comment type="subcellular location">
    <subcellularLocation>
        <location evidence="2">Mitochondrion</location>
    </subcellularLocation>
</comment>
<comment type="similarity">
    <text evidence="3">Belongs to the histidine acid phosphatase family.</text>
</comment>
<comment type="caution">
    <text evidence="3">It is uncertain whether Met-1 or Met-8 is the initiator.</text>
</comment>